<gene>
    <name type="primary">ltaA</name>
    <name type="ordered locus">SAR0986</name>
</gene>
<reference key="1">
    <citation type="journal article" date="2004" name="Proc. Natl. Acad. Sci. U.S.A.">
        <title>Complete genomes of two clinical Staphylococcus aureus strains: evidence for the rapid evolution of virulence and drug resistance.</title>
        <authorList>
            <person name="Holden M.T.G."/>
            <person name="Feil E.J."/>
            <person name="Lindsay J.A."/>
            <person name="Peacock S.J."/>
            <person name="Day N.P.J."/>
            <person name="Enright M.C."/>
            <person name="Foster T.J."/>
            <person name="Moore C.E."/>
            <person name="Hurst L."/>
            <person name="Atkin R."/>
            <person name="Barron A."/>
            <person name="Bason N."/>
            <person name="Bentley S.D."/>
            <person name="Chillingworth C."/>
            <person name="Chillingworth T."/>
            <person name="Churcher C."/>
            <person name="Clark L."/>
            <person name="Corton C."/>
            <person name="Cronin A."/>
            <person name="Doggett J."/>
            <person name="Dowd L."/>
            <person name="Feltwell T."/>
            <person name="Hance Z."/>
            <person name="Harris B."/>
            <person name="Hauser H."/>
            <person name="Holroyd S."/>
            <person name="Jagels K."/>
            <person name="James K.D."/>
            <person name="Lennard N."/>
            <person name="Line A."/>
            <person name="Mayes R."/>
            <person name="Moule S."/>
            <person name="Mungall K."/>
            <person name="Ormond D."/>
            <person name="Quail M.A."/>
            <person name="Rabbinowitsch E."/>
            <person name="Rutherford K.M."/>
            <person name="Sanders M."/>
            <person name="Sharp S."/>
            <person name="Simmonds M."/>
            <person name="Stevens K."/>
            <person name="Whitehead S."/>
            <person name="Barrell B.G."/>
            <person name="Spratt B.G."/>
            <person name="Parkhill J."/>
        </authorList>
    </citation>
    <scope>NUCLEOTIDE SEQUENCE [LARGE SCALE GENOMIC DNA]</scope>
    <source>
        <strain>MRSA252</strain>
    </source>
</reference>
<accession>Q6GI68</accession>
<dbReference type="EMBL" id="BX571856">
    <property type="protein sequence ID" value="CAG39991.1"/>
    <property type="molecule type" value="Genomic_DNA"/>
</dbReference>
<dbReference type="RefSeq" id="WP_001154224.1">
    <property type="nucleotide sequence ID" value="NC_002952.2"/>
</dbReference>
<dbReference type="SMR" id="Q6GI68"/>
<dbReference type="KEGG" id="sar:SAR0986"/>
<dbReference type="HOGENOM" id="CLU_054518_0_0_9"/>
<dbReference type="UniPathway" id="UPA00556"/>
<dbReference type="Proteomes" id="UP000000596">
    <property type="component" value="Chromosome"/>
</dbReference>
<dbReference type="GO" id="GO:0005886">
    <property type="term" value="C:plasma membrane"/>
    <property type="evidence" value="ECO:0007669"/>
    <property type="project" value="UniProtKB-SubCell"/>
</dbReference>
<dbReference type="GO" id="GO:0015297">
    <property type="term" value="F:antiporter activity"/>
    <property type="evidence" value="ECO:0007669"/>
    <property type="project" value="UniProtKB-KW"/>
</dbReference>
<dbReference type="GO" id="GO:0006869">
    <property type="term" value="P:lipid transport"/>
    <property type="evidence" value="ECO:0007669"/>
    <property type="project" value="UniProtKB-KW"/>
</dbReference>
<dbReference type="GO" id="GO:0070395">
    <property type="term" value="P:lipoteichoic acid biosynthetic process"/>
    <property type="evidence" value="ECO:0007669"/>
    <property type="project" value="UniProtKB-UniPathway"/>
</dbReference>
<dbReference type="CDD" id="cd17325">
    <property type="entry name" value="MFS_MdtG_SLC18_like"/>
    <property type="match status" value="1"/>
</dbReference>
<dbReference type="Gene3D" id="1.20.1250.20">
    <property type="entry name" value="MFS general substrate transporter like domains"/>
    <property type="match status" value="2"/>
</dbReference>
<dbReference type="InterPro" id="IPR050495">
    <property type="entry name" value="ATG22/LtaA_families"/>
</dbReference>
<dbReference type="InterPro" id="IPR011701">
    <property type="entry name" value="MFS"/>
</dbReference>
<dbReference type="InterPro" id="IPR020846">
    <property type="entry name" value="MFS_dom"/>
</dbReference>
<dbReference type="InterPro" id="IPR036259">
    <property type="entry name" value="MFS_trans_sf"/>
</dbReference>
<dbReference type="NCBIfam" id="NF047396">
    <property type="entry name" value="MFS_flip_LtaA"/>
    <property type="match status" value="1"/>
</dbReference>
<dbReference type="PANTHER" id="PTHR23519">
    <property type="entry name" value="AUTOPHAGY-RELATED PROTEIN 22"/>
    <property type="match status" value="1"/>
</dbReference>
<dbReference type="PANTHER" id="PTHR23519:SF1">
    <property type="entry name" value="AUTOPHAGY-RELATED PROTEIN 22"/>
    <property type="match status" value="1"/>
</dbReference>
<dbReference type="Pfam" id="PF07690">
    <property type="entry name" value="MFS_1"/>
    <property type="match status" value="1"/>
</dbReference>
<dbReference type="SUPFAM" id="SSF103473">
    <property type="entry name" value="MFS general substrate transporter"/>
    <property type="match status" value="1"/>
</dbReference>
<dbReference type="PROSITE" id="PS50850">
    <property type="entry name" value="MFS"/>
    <property type="match status" value="1"/>
</dbReference>
<sequence>MQDSSLNNYANHKNFILMLIILFLMEFARGMYILSYINFLPTVTSIAVAITSLAFSIHFIADASTNFVIGFLLKKFGTKIVLTTGFILAFTSLFLVIWFPASPFVIIFSAMMLGIAVSPIWVIMLSSVEEDKRGKQMGYVYFSWLLGLLVGMVFMNLLIKVHPTRFAFMMSLVVLIAWILYYFVDVKLTNYNTRPVKAQLRQIVDVTKRHLLLFPGILLQGAAIAALVPILPTYATKVINVSTIEYTVAIIIGGIGCAVSMLFLSKLIDNRSRNFMYGVILSGFILYMILIFTLSMIVNIHIVWIIALAIGLMYGILLPAWNTFMARFIKSDEQEETWGVFNSIQGFGSMIGPLFGGLITQFTNNLNNTFYFSALIFLVLAVFYGSYFIANREKAK</sequence>
<comment type="function">
    <text evidence="1">Proton-coupled antiporter flippase that catalyzes the translocation, from the inner to the outer leaflet of the cell membrane, of the lipid-linked disaccharide (anchor-LLD) that anchors lipoteichoic acids (LTA) to the cell membrane.</text>
</comment>
<comment type="pathway">
    <text evidence="1">Cell wall biogenesis; lipoteichoic acid biosynthesis.</text>
</comment>
<comment type="subcellular location">
    <subcellularLocation>
        <location evidence="1">Cell membrane</location>
        <topology evidence="1">Multi-pass membrane protein</topology>
    </subcellularLocation>
</comment>
<comment type="similarity">
    <text evidence="3">Belongs to the major facilitator superfamily. LtaA family.</text>
</comment>
<protein>
    <recommendedName>
        <fullName evidence="1">Proton-coupled antiporter flippase LtaA</fullName>
    </recommendedName>
    <alternativeName>
        <fullName evidence="1">Lipoteichoic acid protein A</fullName>
    </alternativeName>
</protein>
<feature type="chain" id="PRO_0000287154" description="Proton-coupled antiporter flippase LtaA">
    <location>
        <begin position="1"/>
        <end position="396"/>
    </location>
</feature>
<feature type="transmembrane region" description="Helical" evidence="2">
    <location>
        <begin position="15"/>
        <end position="34"/>
    </location>
</feature>
<feature type="transmembrane region" description="Helical" evidence="2">
    <location>
        <begin position="46"/>
        <end position="73"/>
    </location>
</feature>
<feature type="transmembrane region" description="Helical" evidence="2">
    <location>
        <begin position="80"/>
        <end position="99"/>
    </location>
</feature>
<feature type="transmembrane region" description="Helical" evidence="2">
    <location>
        <begin position="105"/>
        <end position="126"/>
    </location>
</feature>
<feature type="transmembrane region" description="Helical" evidence="2">
    <location>
        <begin position="138"/>
        <end position="159"/>
    </location>
</feature>
<feature type="transmembrane region" description="Helical" evidence="2">
    <location>
        <begin position="165"/>
        <end position="184"/>
    </location>
</feature>
<feature type="transmembrane region" description="Helical" evidence="2">
    <location>
        <begin position="211"/>
        <end position="231"/>
    </location>
</feature>
<feature type="transmembrane region" description="Helical" evidence="2">
    <location>
        <begin position="243"/>
        <end position="264"/>
    </location>
</feature>
<feature type="transmembrane region" description="Helical" evidence="2">
    <location>
        <begin position="276"/>
        <end position="298"/>
    </location>
</feature>
<feature type="transmembrane region" description="Helical" evidence="2">
    <location>
        <begin position="304"/>
        <end position="326"/>
    </location>
</feature>
<feature type="transmembrane region" description="Helical" evidence="2">
    <location>
        <begin position="338"/>
        <end position="358"/>
    </location>
</feature>
<feature type="transmembrane region" description="Helical" evidence="2">
    <location>
        <begin position="370"/>
        <end position="390"/>
    </location>
</feature>
<organism>
    <name type="scientific">Staphylococcus aureus (strain MRSA252)</name>
    <dbReference type="NCBI Taxonomy" id="282458"/>
    <lineage>
        <taxon>Bacteria</taxon>
        <taxon>Bacillati</taxon>
        <taxon>Bacillota</taxon>
        <taxon>Bacilli</taxon>
        <taxon>Bacillales</taxon>
        <taxon>Staphylococcaceae</taxon>
        <taxon>Staphylococcus</taxon>
    </lineage>
</organism>
<proteinExistence type="inferred from homology"/>
<evidence type="ECO:0000250" key="1">
    <source>
        <dbReference type="UniProtKB" id="Q2FZP8"/>
    </source>
</evidence>
<evidence type="ECO:0000255" key="2"/>
<evidence type="ECO:0000305" key="3"/>
<name>LTAA_STAAR</name>
<keyword id="KW-0050">Antiport</keyword>
<keyword id="KW-1003">Cell membrane</keyword>
<keyword id="KW-0445">Lipid transport</keyword>
<keyword id="KW-0472">Membrane</keyword>
<keyword id="KW-0812">Transmembrane</keyword>
<keyword id="KW-1133">Transmembrane helix</keyword>
<keyword id="KW-0813">Transport</keyword>
<keyword id="KW-0843">Virulence</keyword>